<gene>
    <name evidence="1" type="primary">rpsQ</name>
    <name type="ordered locus">APH_0289</name>
</gene>
<protein>
    <recommendedName>
        <fullName evidence="1">Small ribosomal subunit protein uS17</fullName>
    </recommendedName>
    <alternativeName>
        <fullName evidence="2">30S ribosomal protein S17</fullName>
    </alternativeName>
</protein>
<comment type="function">
    <text evidence="1">One of the primary rRNA binding proteins, it binds specifically to the 5'-end of 16S ribosomal RNA.</text>
</comment>
<comment type="subunit">
    <text evidence="1">Part of the 30S ribosomal subunit.</text>
</comment>
<comment type="similarity">
    <text evidence="1">Belongs to the universal ribosomal protein uS17 family.</text>
</comment>
<keyword id="KW-0687">Ribonucleoprotein</keyword>
<keyword id="KW-0689">Ribosomal protein</keyword>
<keyword id="KW-0694">RNA-binding</keyword>
<keyword id="KW-0699">rRNA-binding</keyword>
<feature type="chain" id="PRO_0000255665" description="Small ribosomal subunit protein uS17">
    <location>
        <begin position="1"/>
        <end position="76"/>
    </location>
</feature>
<proteinExistence type="inferred from homology"/>
<dbReference type="EMBL" id="CP000235">
    <property type="protein sequence ID" value="ABD44107.1"/>
    <property type="molecule type" value="Genomic_DNA"/>
</dbReference>
<dbReference type="RefSeq" id="WP_011450424.1">
    <property type="nucleotide sequence ID" value="NC_007797.1"/>
</dbReference>
<dbReference type="SMR" id="Q2GL50"/>
<dbReference type="STRING" id="212042.APH_0289"/>
<dbReference type="PaxDb" id="212042-APH_0289"/>
<dbReference type="EnsemblBacteria" id="ABD44107">
    <property type="protein sequence ID" value="ABD44107"/>
    <property type="gene ID" value="APH_0289"/>
</dbReference>
<dbReference type="GeneID" id="92747514"/>
<dbReference type="KEGG" id="aph:APH_0289"/>
<dbReference type="eggNOG" id="COG0186">
    <property type="taxonomic scope" value="Bacteria"/>
</dbReference>
<dbReference type="HOGENOM" id="CLU_073626_1_1_5"/>
<dbReference type="Proteomes" id="UP000001943">
    <property type="component" value="Chromosome"/>
</dbReference>
<dbReference type="GO" id="GO:0022627">
    <property type="term" value="C:cytosolic small ribosomal subunit"/>
    <property type="evidence" value="ECO:0007669"/>
    <property type="project" value="TreeGrafter"/>
</dbReference>
<dbReference type="GO" id="GO:0019843">
    <property type="term" value="F:rRNA binding"/>
    <property type="evidence" value="ECO:0007669"/>
    <property type="project" value="UniProtKB-UniRule"/>
</dbReference>
<dbReference type="GO" id="GO:0003735">
    <property type="term" value="F:structural constituent of ribosome"/>
    <property type="evidence" value="ECO:0007669"/>
    <property type="project" value="InterPro"/>
</dbReference>
<dbReference type="GO" id="GO:0006412">
    <property type="term" value="P:translation"/>
    <property type="evidence" value="ECO:0007669"/>
    <property type="project" value="UniProtKB-UniRule"/>
</dbReference>
<dbReference type="CDD" id="cd00364">
    <property type="entry name" value="Ribosomal_uS17"/>
    <property type="match status" value="1"/>
</dbReference>
<dbReference type="Gene3D" id="2.40.50.140">
    <property type="entry name" value="Nucleic acid-binding proteins"/>
    <property type="match status" value="1"/>
</dbReference>
<dbReference type="HAMAP" id="MF_01345_B">
    <property type="entry name" value="Ribosomal_uS17_B"/>
    <property type="match status" value="1"/>
</dbReference>
<dbReference type="InterPro" id="IPR012340">
    <property type="entry name" value="NA-bd_OB-fold"/>
</dbReference>
<dbReference type="InterPro" id="IPR000266">
    <property type="entry name" value="Ribosomal_uS17"/>
</dbReference>
<dbReference type="InterPro" id="IPR019984">
    <property type="entry name" value="Ribosomal_uS17_bact/chlr"/>
</dbReference>
<dbReference type="NCBIfam" id="NF004123">
    <property type="entry name" value="PRK05610.1"/>
    <property type="match status" value="1"/>
</dbReference>
<dbReference type="NCBIfam" id="TIGR03635">
    <property type="entry name" value="uS17_bact"/>
    <property type="match status" value="1"/>
</dbReference>
<dbReference type="PANTHER" id="PTHR10744">
    <property type="entry name" value="40S RIBOSOMAL PROTEIN S11 FAMILY MEMBER"/>
    <property type="match status" value="1"/>
</dbReference>
<dbReference type="PANTHER" id="PTHR10744:SF1">
    <property type="entry name" value="SMALL RIBOSOMAL SUBUNIT PROTEIN US17M"/>
    <property type="match status" value="1"/>
</dbReference>
<dbReference type="Pfam" id="PF00366">
    <property type="entry name" value="Ribosomal_S17"/>
    <property type="match status" value="1"/>
</dbReference>
<dbReference type="PRINTS" id="PR00973">
    <property type="entry name" value="RIBOSOMALS17"/>
</dbReference>
<dbReference type="SUPFAM" id="SSF50249">
    <property type="entry name" value="Nucleic acid-binding proteins"/>
    <property type="match status" value="1"/>
</dbReference>
<name>RS17_ANAPZ</name>
<sequence length="76" mass="8831">MSKGVLVGVVTDARRDKTVKVSVYRMVHHKVYKKIVKKCRVYSVHDEQNRCARGDVVKIREHVPISATKRWIVVDE</sequence>
<evidence type="ECO:0000255" key="1">
    <source>
        <dbReference type="HAMAP-Rule" id="MF_01345"/>
    </source>
</evidence>
<evidence type="ECO:0000305" key="2"/>
<reference key="1">
    <citation type="journal article" date="2006" name="PLoS Genet.">
        <title>Comparative genomics of emerging human ehrlichiosis agents.</title>
        <authorList>
            <person name="Dunning Hotopp J.C."/>
            <person name="Lin M."/>
            <person name="Madupu R."/>
            <person name="Crabtree J."/>
            <person name="Angiuoli S.V."/>
            <person name="Eisen J.A."/>
            <person name="Seshadri R."/>
            <person name="Ren Q."/>
            <person name="Wu M."/>
            <person name="Utterback T.R."/>
            <person name="Smith S."/>
            <person name="Lewis M."/>
            <person name="Khouri H."/>
            <person name="Zhang C."/>
            <person name="Niu H."/>
            <person name="Lin Q."/>
            <person name="Ohashi N."/>
            <person name="Zhi N."/>
            <person name="Nelson W.C."/>
            <person name="Brinkac L.M."/>
            <person name="Dodson R.J."/>
            <person name="Rosovitz M.J."/>
            <person name="Sundaram J.P."/>
            <person name="Daugherty S.C."/>
            <person name="Davidsen T."/>
            <person name="Durkin A.S."/>
            <person name="Gwinn M.L."/>
            <person name="Haft D.H."/>
            <person name="Selengut J.D."/>
            <person name="Sullivan S.A."/>
            <person name="Zafar N."/>
            <person name="Zhou L."/>
            <person name="Benahmed F."/>
            <person name="Forberger H."/>
            <person name="Halpin R."/>
            <person name="Mulligan S."/>
            <person name="Robinson J."/>
            <person name="White O."/>
            <person name="Rikihisa Y."/>
            <person name="Tettelin H."/>
        </authorList>
    </citation>
    <scope>NUCLEOTIDE SEQUENCE [LARGE SCALE GENOMIC DNA]</scope>
    <source>
        <strain>HZ</strain>
    </source>
</reference>
<organism>
    <name type="scientific">Anaplasma phagocytophilum (strain HZ)</name>
    <dbReference type="NCBI Taxonomy" id="212042"/>
    <lineage>
        <taxon>Bacteria</taxon>
        <taxon>Pseudomonadati</taxon>
        <taxon>Pseudomonadota</taxon>
        <taxon>Alphaproteobacteria</taxon>
        <taxon>Rickettsiales</taxon>
        <taxon>Anaplasmataceae</taxon>
        <taxon>Anaplasma</taxon>
        <taxon>phagocytophilum group</taxon>
    </lineage>
</organism>
<accession>Q2GL50</accession>